<accession>Q8H063</accession>
<accession>A0A0P0VUJ9</accession>
<keyword id="KW-0378">Hydrolase</keyword>
<keyword id="KW-0460">Magnesium</keyword>
<keyword id="KW-0464">Manganese</keyword>
<keyword id="KW-0479">Metal-binding</keyword>
<keyword id="KW-0904">Protein phosphatase</keyword>
<keyword id="KW-1185">Reference proteome</keyword>
<reference key="1">
    <citation type="journal article" date="2005" name="Genome Res.">
        <title>Sequence, annotation, and analysis of synteny between rice chromosome 3 and diverged grass species.</title>
        <authorList>
            <consortium name="The rice chromosome 3 sequencing consortium"/>
            <person name="Buell C.R."/>
            <person name="Yuan Q."/>
            <person name="Ouyang S."/>
            <person name="Liu J."/>
            <person name="Zhu W."/>
            <person name="Wang A."/>
            <person name="Maiti R."/>
            <person name="Haas B."/>
            <person name="Wortman J."/>
            <person name="Pertea M."/>
            <person name="Jones K.M."/>
            <person name="Kim M."/>
            <person name="Overton L."/>
            <person name="Tsitrin T."/>
            <person name="Fadrosh D."/>
            <person name="Bera J."/>
            <person name="Weaver B."/>
            <person name="Jin S."/>
            <person name="Johri S."/>
            <person name="Reardon M."/>
            <person name="Webb K."/>
            <person name="Hill J."/>
            <person name="Moffat K."/>
            <person name="Tallon L."/>
            <person name="Van Aken S."/>
            <person name="Lewis M."/>
            <person name="Utterback T."/>
            <person name="Feldblyum T."/>
            <person name="Zismann V."/>
            <person name="Iobst S."/>
            <person name="Hsiao J."/>
            <person name="de Vazeille A.R."/>
            <person name="Salzberg S.L."/>
            <person name="White O."/>
            <person name="Fraser C.M."/>
            <person name="Yu Y."/>
            <person name="Kim H."/>
            <person name="Rambo T."/>
            <person name="Currie J."/>
            <person name="Collura K."/>
            <person name="Kernodle-Thompson S."/>
            <person name="Wei F."/>
            <person name="Kudrna K."/>
            <person name="Ammiraju J.S.S."/>
            <person name="Luo M."/>
            <person name="Goicoechea J.L."/>
            <person name="Wing R.A."/>
            <person name="Henry D."/>
            <person name="Oates R."/>
            <person name="Palmer M."/>
            <person name="Pries G."/>
            <person name="Saski C."/>
            <person name="Simmons J."/>
            <person name="Soderlund C."/>
            <person name="Nelson W."/>
            <person name="de la Bastide M."/>
            <person name="Spiegel L."/>
            <person name="Nascimento L."/>
            <person name="Huang E."/>
            <person name="Preston R."/>
            <person name="Zutavern T."/>
            <person name="Palmer L."/>
            <person name="O'Shaughnessy A."/>
            <person name="Dike S."/>
            <person name="McCombie W.R."/>
            <person name="Minx P."/>
            <person name="Cordum H."/>
            <person name="Wilson R."/>
            <person name="Jin W."/>
            <person name="Lee H.R."/>
            <person name="Jiang J."/>
            <person name="Jackson S."/>
        </authorList>
    </citation>
    <scope>NUCLEOTIDE SEQUENCE [LARGE SCALE GENOMIC DNA]</scope>
    <source>
        <strain>cv. Nipponbare</strain>
    </source>
</reference>
<reference key="2">
    <citation type="journal article" date="2005" name="Nature">
        <title>The map-based sequence of the rice genome.</title>
        <authorList>
            <consortium name="International rice genome sequencing project (IRGSP)"/>
        </authorList>
    </citation>
    <scope>NUCLEOTIDE SEQUENCE [LARGE SCALE GENOMIC DNA]</scope>
    <source>
        <strain>cv. Nipponbare</strain>
    </source>
</reference>
<reference key="3">
    <citation type="journal article" date="2008" name="Nucleic Acids Res.">
        <title>The rice annotation project database (RAP-DB): 2008 update.</title>
        <authorList>
            <consortium name="The rice annotation project (RAP)"/>
        </authorList>
    </citation>
    <scope>GENOME REANNOTATION</scope>
    <source>
        <strain>cv. Nipponbare</strain>
    </source>
</reference>
<reference key="4">
    <citation type="journal article" date="2013" name="Rice">
        <title>Improvement of the Oryza sativa Nipponbare reference genome using next generation sequence and optical map data.</title>
        <authorList>
            <person name="Kawahara Y."/>
            <person name="de la Bastide M."/>
            <person name="Hamilton J.P."/>
            <person name="Kanamori H."/>
            <person name="McCombie W.R."/>
            <person name="Ouyang S."/>
            <person name="Schwartz D.C."/>
            <person name="Tanaka T."/>
            <person name="Wu J."/>
            <person name="Zhou S."/>
            <person name="Childs K.L."/>
            <person name="Davidson R.M."/>
            <person name="Lin H."/>
            <person name="Quesada-Ocampo L."/>
            <person name="Vaillancourt B."/>
            <person name="Sakai H."/>
            <person name="Lee S.S."/>
            <person name="Kim J."/>
            <person name="Numa H."/>
            <person name="Itoh T."/>
            <person name="Buell C.R."/>
            <person name="Matsumoto T."/>
        </authorList>
    </citation>
    <scope>GENOME REANNOTATION</scope>
    <source>
        <strain>cv. Nipponbare</strain>
    </source>
</reference>
<reference key="5">
    <citation type="journal article" date="2003" name="Science">
        <title>Collection, mapping, and annotation of over 28,000 cDNA clones from japonica rice.</title>
        <authorList>
            <consortium name="The rice full-length cDNA consortium"/>
        </authorList>
    </citation>
    <scope>NUCLEOTIDE SEQUENCE [LARGE SCALE MRNA]</scope>
    <source>
        <strain>cv. Nipponbare</strain>
    </source>
</reference>
<reference key="6">
    <citation type="journal article" date="2008" name="BMC Genomics">
        <title>Genome-wide and expression analysis of protein phosphatase 2C in rice and Arabidopsis.</title>
        <authorList>
            <person name="Xue T."/>
            <person name="Wang D."/>
            <person name="Zhang S."/>
            <person name="Ehlting J."/>
            <person name="Ni F."/>
            <person name="Jacab S."/>
            <person name="Zheng C."/>
            <person name="Zhong Y."/>
        </authorList>
    </citation>
    <scope>GENE FAMILY</scope>
    <scope>NOMENCLATURE</scope>
</reference>
<organism>
    <name type="scientific">Oryza sativa subsp. japonica</name>
    <name type="common">Rice</name>
    <dbReference type="NCBI Taxonomy" id="39947"/>
    <lineage>
        <taxon>Eukaryota</taxon>
        <taxon>Viridiplantae</taxon>
        <taxon>Streptophyta</taxon>
        <taxon>Embryophyta</taxon>
        <taxon>Tracheophyta</taxon>
        <taxon>Spermatophyta</taxon>
        <taxon>Magnoliopsida</taxon>
        <taxon>Liliopsida</taxon>
        <taxon>Poales</taxon>
        <taxon>Poaceae</taxon>
        <taxon>BOP clade</taxon>
        <taxon>Oryzoideae</taxon>
        <taxon>Oryzeae</taxon>
        <taxon>Oryzinae</taxon>
        <taxon>Oryza</taxon>
        <taxon>Oryza sativa</taxon>
    </lineage>
</organism>
<feature type="chain" id="PRO_0000363275" description="Probable protein phosphatase 2C 29">
    <location>
        <begin position="1"/>
        <end position="392"/>
    </location>
</feature>
<feature type="domain" description="PPM-type phosphatase" evidence="2">
    <location>
        <begin position="44"/>
        <end position="353"/>
    </location>
</feature>
<feature type="region of interest" description="Disordered" evidence="3">
    <location>
        <begin position="360"/>
        <end position="392"/>
    </location>
</feature>
<feature type="binding site" evidence="1">
    <location>
        <position position="75"/>
    </location>
    <ligand>
        <name>Mn(2+)</name>
        <dbReference type="ChEBI" id="CHEBI:29035"/>
        <label>1</label>
    </ligand>
</feature>
<feature type="binding site" evidence="1">
    <location>
        <position position="75"/>
    </location>
    <ligand>
        <name>Mn(2+)</name>
        <dbReference type="ChEBI" id="CHEBI:29035"/>
        <label>2</label>
    </ligand>
</feature>
<feature type="binding site" evidence="1">
    <location>
        <position position="76"/>
    </location>
    <ligand>
        <name>Mn(2+)</name>
        <dbReference type="ChEBI" id="CHEBI:29035"/>
        <label>1</label>
    </ligand>
</feature>
<feature type="binding site" evidence="1">
    <location>
        <position position="285"/>
    </location>
    <ligand>
        <name>Mn(2+)</name>
        <dbReference type="ChEBI" id="CHEBI:29035"/>
        <label>2</label>
    </ligand>
</feature>
<feature type="binding site" evidence="1">
    <location>
        <position position="344"/>
    </location>
    <ligand>
        <name>Mn(2+)</name>
        <dbReference type="ChEBI" id="CHEBI:29035"/>
        <label>2</label>
    </ligand>
</feature>
<sequence>MGALRRWLPCCCCCCRGGGGGGGGGSVGDGLVWDVALKAHASGDYSVAVAQANEALEDQAQVFVSPAATLVGVYDGHGGPEAARFVNKRLFSLIQEFAAQSGGISAEVLEKAFGETEEEFVASVQRSWPSQPRILSVGSCCLVGAIEDGTLYVANLGDSRAVLGRRSAAGAAHGRKGKNRVVPERLSRDHNVADEDVRRELKELHPDDSHIVLNTHGVWRIKGIIQVSRSIGDVYLKKPEICKSNPMLQQTICPFPLRRPVMSAVPTIKTRKLRPGDQFVIFASDGLWEQLTDEAAVAIVAGSPRRGVAMRLVRAAQLEAARKKDVKYERIRTIEKGQRRHFHDDITVVVLFLDKCRGKAGRGDEIDGTDGPVDVFSLSPDDREDPTRPVLR</sequence>
<proteinExistence type="evidence at transcript level"/>
<dbReference type="EC" id="3.1.3.16"/>
<dbReference type="EMBL" id="AC105928">
    <property type="protein sequence ID" value="AAN77302.1"/>
    <property type="molecule type" value="Genomic_DNA"/>
</dbReference>
<dbReference type="EMBL" id="DP000009">
    <property type="protein sequence ID" value="ABF94562.1"/>
    <property type="molecule type" value="Genomic_DNA"/>
</dbReference>
<dbReference type="EMBL" id="AP008209">
    <property type="protein sequence ID" value="BAF11240.1"/>
    <property type="molecule type" value="Genomic_DNA"/>
</dbReference>
<dbReference type="EMBL" id="AP014959">
    <property type="protein sequence ID" value="BAS82880.1"/>
    <property type="molecule type" value="Genomic_DNA"/>
</dbReference>
<dbReference type="EMBL" id="AK072292">
    <property type="protein sequence ID" value="BAG92909.1"/>
    <property type="molecule type" value="mRNA"/>
</dbReference>
<dbReference type="RefSeq" id="XP_015628666.1">
    <property type="nucleotide sequence ID" value="XM_015773180.1"/>
</dbReference>
<dbReference type="SMR" id="Q8H063"/>
<dbReference type="FunCoup" id="Q8H063">
    <property type="interactions" value="1034"/>
</dbReference>
<dbReference type="STRING" id="39947.Q8H063"/>
<dbReference type="PaxDb" id="39947-Q8H063"/>
<dbReference type="EnsemblPlants" id="Os03t0207400-01">
    <property type="protein sequence ID" value="Os03t0207400-01"/>
    <property type="gene ID" value="Os03g0207400"/>
</dbReference>
<dbReference type="Gramene" id="Os03t0207400-01">
    <property type="protein sequence ID" value="Os03t0207400-01"/>
    <property type="gene ID" value="Os03g0207400"/>
</dbReference>
<dbReference type="KEGG" id="dosa:Os03g0207400"/>
<dbReference type="eggNOG" id="KOG0700">
    <property type="taxonomic scope" value="Eukaryota"/>
</dbReference>
<dbReference type="HOGENOM" id="CLU_013173_2_2_1"/>
<dbReference type="InParanoid" id="Q8H063"/>
<dbReference type="OMA" id="KKPEICK"/>
<dbReference type="OrthoDB" id="420076at2759"/>
<dbReference type="Proteomes" id="UP000000763">
    <property type="component" value="Chromosome 3"/>
</dbReference>
<dbReference type="Proteomes" id="UP000059680">
    <property type="component" value="Chromosome 3"/>
</dbReference>
<dbReference type="GO" id="GO:0046872">
    <property type="term" value="F:metal ion binding"/>
    <property type="evidence" value="ECO:0007669"/>
    <property type="project" value="UniProtKB-KW"/>
</dbReference>
<dbReference type="GO" id="GO:0004722">
    <property type="term" value="F:protein serine/threonine phosphatase activity"/>
    <property type="evidence" value="ECO:0000318"/>
    <property type="project" value="GO_Central"/>
</dbReference>
<dbReference type="GO" id="GO:1902531">
    <property type="term" value="P:regulation of intracellular signal transduction"/>
    <property type="evidence" value="ECO:0000318"/>
    <property type="project" value="GO_Central"/>
</dbReference>
<dbReference type="CDD" id="cd00143">
    <property type="entry name" value="PP2Cc"/>
    <property type="match status" value="1"/>
</dbReference>
<dbReference type="FunFam" id="3.60.40.10:FF:000020">
    <property type="entry name" value="Probable protein phosphatase 2C 42"/>
    <property type="match status" value="1"/>
</dbReference>
<dbReference type="Gene3D" id="3.60.40.10">
    <property type="entry name" value="PPM-type phosphatase domain"/>
    <property type="match status" value="1"/>
</dbReference>
<dbReference type="InterPro" id="IPR015655">
    <property type="entry name" value="PP2C"/>
</dbReference>
<dbReference type="InterPro" id="IPR000222">
    <property type="entry name" value="PP2C_BS"/>
</dbReference>
<dbReference type="InterPro" id="IPR036457">
    <property type="entry name" value="PPM-type-like_dom_sf"/>
</dbReference>
<dbReference type="InterPro" id="IPR001932">
    <property type="entry name" value="PPM-type_phosphatase-like_dom"/>
</dbReference>
<dbReference type="PANTHER" id="PTHR47992">
    <property type="entry name" value="PROTEIN PHOSPHATASE"/>
    <property type="match status" value="1"/>
</dbReference>
<dbReference type="Pfam" id="PF00481">
    <property type="entry name" value="PP2C"/>
    <property type="match status" value="1"/>
</dbReference>
<dbReference type="SMART" id="SM00331">
    <property type="entry name" value="PP2C_SIG"/>
    <property type="match status" value="1"/>
</dbReference>
<dbReference type="SMART" id="SM00332">
    <property type="entry name" value="PP2Cc"/>
    <property type="match status" value="1"/>
</dbReference>
<dbReference type="SUPFAM" id="SSF81606">
    <property type="entry name" value="PP2C-like"/>
    <property type="match status" value="1"/>
</dbReference>
<dbReference type="PROSITE" id="PS01032">
    <property type="entry name" value="PPM_1"/>
    <property type="match status" value="1"/>
</dbReference>
<dbReference type="PROSITE" id="PS51746">
    <property type="entry name" value="PPM_2"/>
    <property type="match status" value="1"/>
</dbReference>
<comment type="catalytic activity">
    <reaction>
        <text>O-phospho-L-seryl-[protein] + H2O = L-seryl-[protein] + phosphate</text>
        <dbReference type="Rhea" id="RHEA:20629"/>
        <dbReference type="Rhea" id="RHEA-COMP:9863"/>
        <dbReference type="Rhea" id="RHEA-COMP:11604"/>
        <dbReference type="ChEBI" id="CHEBI:15377"/>
        <dbReference type="ChEBI" id="CHEBI:29999"/>
        <dbReference type="ChEBI" id="CHEBI:43474"/>
        <dbReference type="ChEBI" id="CHEBI:83421"/>
        <dbReference type="EC" id="3.1.3.16"/>
    </reaction>
</comment>
<comment type="catalytic activity">
    <reaction>
        <text>O-phospho-L-threonyl-[protein] + H2O = L-threonyl-[protein] + phosphate</text>
        <dbReference type="Rhea" id="RHEA:47004"/>
        <dbReference type="Rhea" id="RHEA-COMP:11060"/>
        <dbReference type="Rhea" id="RHEA-COMP:11605"/>
        <dbReference type="ChEBI" id="CHEBI:15377"/>
        <dbReference type="ChEBI" id="CHEBI:30013"/>
        <dbReference type="ChEBI" id="CHEBI:43474"/>
        <dbReference type="ChEBI" id="CHEBI:61977"/>
        <dbReference type="EC" id="3.1.3.16"/>
    </reaction>
</comment>
<comment type="cofactor">
    <cofactor evidence="1">
        <name>Mg(2+)</name>
        <dbReference type="ChEBI" id="CHEBI:18420"/>
    </cofactor>
    <cofactor evidence="1">
        <name>Mn(2+)</name>
        <dbReference type="ChEBI" id="CHEBI:29035"/>
    </cofactor>
    <text evidence="1">Binds 2 magnesium or manganese ions per subunit.</text>
</comment>
<comment type="similarity">
    <text evidence="4">Belongs to the PP2C family.</text>
</comment>
<protein>
    <recommendedName>
        <fullName>Probable protein phosphatase 2C 29</fullName>
        <shortName>OsPP2C29</shortName>
        <ecNumber>3.1.3.16</ecNumber>
    </recommendedName>
</protein>
<name>P2C29_ORYSJ</name>
<gene>
    <name type="ordered locus">Os03g0207400</name>
    <name type="ordered locus">LOC_Os03g10950</name>
    <name type="ORF">OSJNBa0014O06.9</name>
</gene>
<evidence type="ECO:0000250" key="1"/>
<evidence type="ECO:0000255" key="2">
    <source>
        <dbReference type="PROSITE-ProRule" id="PRU01082"/>
    </source>
</evidence>
<evidence type="ECO:0000256" key="3">
    <source>
        <dbReference type="SAM" id="MobiDB-lite"/>
    </source>
</evidence>
<evidence type="ECO:0000305" key="4"/>